<feature type="chain" id="PRO_0000442281" description="p-cumate 2,3-dioxygenase system, ferredoxin--NAD(+) reductase component">
    <location>
        <begin position="1"/>
        <end position="402"/>
    </location>
</feature>
<feature type="binding site" evidence="1">
    <location>
        <position position="16"/>
    </location>
    <ligand>
        <name>FAD</name>
        <dbReference type="ChEBI" id="CHEBI:57692"/>
    </ligand>
</feature>
<feature type="binding site" evidence="1">
    <location>
        <position position="51"/>
    </location>
    <ligand>
        <name>FAD</name>
        <dbReference type="ChEBI" id="CHEBI:57692"/>
    </ligand>
</feature>
<feature type="binding site" evidence="1">
    <location>
        <position position="83"/>
    </location>
    <ligand>
        <name>FAD</name>
        <dbReference type="ChEBI" id="CHEBI:57692"/>
    </ligand>
</feature>
<feature type="binding site" evidence="1">
    <location>
        <position position="131"/>
    </location>
    <ligand>
        <name>FAD</name>
        <dbReference type="ChEBI" id="CHEBI:57692"/>
    </ligand>
</feature>
<feature type="binding site" evidence="1">
    <location>
        <position position="275"/>
    </location>
    <ligand>
        <name>FAD</name>
        <dbReference type="ChEBI" id="CHEBI:57692"/>
    </ligand>
</feature>
<keyword id="KW-0058">Aromatic hydrocarbons catabolism</keyword>
<keyword id="KW-0274">FAD</keyword>
<keyword id="KW-0285">Flavoprotein</keyword>
<keyword id="KW-0520">NAD</keyword>
<keyword id="KW-0560">Oxidoreductase</keyword>
<organism>
    <name type="scientific">Pseudomonas putida</name>
    <name type="common">Arthrobacter siderocapsulatus</name>
    <dbReference type="NCBI Taxonomy" id="303"/>
    <lineage>
        <taxon>Bacteria</taxon>
        <taxon>Pseudomonadati</taxon>
        <taxon>Pseudomonadota</taxon>
        <taxon>Gammaproteobacteria</taxon>
        <taxon>Pseudomonadales</taxon>
        <taxon>Pseudomonadaceae</taxon>
        <taxon>Pseudomonas</taxon>
    </lineage>
</organism>
<dbReference type="EC" id="1.18.1.3" evidence="7"/>
<dbReference type="EMBL" id="U24215">
    <property type="protein sequence ID" value="AAB62284.1"/>
    <property type="molecule type" value="Genomic_DNA"/>
</dbReference>
<dbReference type="EMBL" id="AB042508">
    <property type="protein sequence ID" value="BAB17770.1"/>
    <property type="molecule type" value="Genomic_DNA"/>
</dbReference>
<dbReference type="EMBL" id="DQ157469">
    <property type="protein sequence ID" value="ABA10793.1"/>
    <property type="molecule type" value="Genomic_DNA"/>
</dbReference>
<dbReference type="EMBL" id="NHBC01000013">
    <property type="protein sequence ID" value="OUS88313.1"/>
    <property type="molecule type" value="Genomic_DNA"/>
</dbReference>
<dbReference type="RefSeq" id="WP_012052618.1">
    <property type="nucleotide sequence ID" value="NZ_NHBC01000013.1"/>
</dbReference>
<dbReference type="SMR" id="Q51973"/>
<dbReference type="BioCyc" id="MetaCyc:MONOMER-341"/>
<dbReference type="BRENDA" id="1.14.12.25">
    <property type="organism ID" value="5092"/>
</dbReference>
<dbReference type="GO" id="GO:0005737">
    <property type="term" value="C:cytoplasm"/>
    <property type="evidence" value="ECO:0007669"/>
    <property type="project" value="TreeGrafter"/>
</dbReference>
<dbReference type="GO" id="GO:0008860">
    <property type="term" value="F:ferredoxin-NAD+ reductase activity"/>
    <property type="evidence" value="ECO:0007669"/>
    <property type="project" value="UniProtKB-EC"/>
</dbReference>
<dbReference type="GO" id="GO:0016651">
    <property type="term" value="F:oxidoreductase activity, acting on NAD(P)H"/>
    <property type="evidence" value="ECO:0007669"/>
    <property type="project" value="TreeGrafter"/>
</dbReference>
<dbReference type="GO" id="GO:0009056">
    <property type="term" value="P:catabolic process"/>
    <property type="evidence" value="ECO:0007669"/>
    <property type="project" value="UniProtKB-KW"/>
</dbReference>
<dbReference type="Gene3D" id="3.30.390.30">
    <property type="match status" value="1"/>
</dbReference>
<dbReference type="Gene3D" id="3.50.50.60">
    <property type="entry name" value="FAD/NAD(P)-binding domain"/>
    <property type="match status" value="2"/>
</dbReference>
<dbReference type="InterPro" id="IPR050446">
    <property type="entry name" value="FAD-oxidoreductase/Apoptosis"/>
</dbReference>
<dbReference type="InterPro" id="IPR036188">
    <property type="entry name" value="FAD/NAD-bd_sf"/>
</dbReference>
<dbReference type="InterPro" id="IPR023753">
    <property type="entry name" value="FAD/NAD-binding_dom"/>
</dbReference>
<dbReference type="InterPro" id="IPR016156">
    <property type="entry name" value="FAD/NAD-linked_Rdtase_dimer_sf"/>
</dbReference>
<dbReference type="InterPro" id="IPR028202">
    <property type="entry name" value="Reductase_C"/>
</dbReference>
<dbReference type="PANTHER" id="PTHR43557">
    <property type="entry name" value="APOPTOSIS-INDUCING FACTOR 1"/>
    <property type="match status" value="1"/>
</dbReference>
<dbReference type="PANTHER" id="PTHR43557:SF2">
    <property type="entry name" value="RIESKE DOMAIN-CONTAINING PROTEIN-RELATED"/>
    <property type="match status" value="1"/>
</dbReference>
<dbReference type="Pfam" id="PF07992">
    <property type="entry name" value="Pyr_redox_2"/>
    <property type="match status" value="1"/>
</dbReference>
<dbReference type="Pfam" id="PF14759">
    <property type="entry name" value="Reductase_C"/>
    <property type="match status" value="1"/>
</dbReference>
<dbReference type="PRINTS" id="PR00368">
    <property type="entry name" value="FADPNR"/>
</dbReference>
<dbReference type="PRINTS" id="PR00411">
    <property type="entry name" value="PNDRDTASEI"/>
</dbReference>
<dbReference type="SUPFAM" id="SSF51905">
    <property type="entry name" value="FAD/NAD(P)-binding domain"/>
    <property type="match status" value="1"/>
</dbReference>
<dbReference type="SUPFAM" id="SSF55424">
    <property type="entry name" value="FAD/NAD-linked reductases, dimerisation (C-terminal) domain"/>
    <property type="match status" value="1"/>
</dbReference>
<name>CMTAA_PSEPU</name>
<comment type="function">
    <text evidence="2 3 7">Component of the p-cumate 2,3-dioxygenase multicomponent enzyme system which catalyzes the incorporation of both atoms of molecular oxygen into p-cumate to form cis-2,3-dihydroxy-2,3-dihydro-p-cumate. Ferredoxin reductase catalyzes the transfer of electrons from NADH to ferredoxin (CmtAd).</text>
</comment>
<comment type="catalytic activity">
    <reaction evidence="7">
        <text>2 reduced [2Fe-2S]-[ferredoxin] + NAD(+) + H(+) = 2 oxidized [2Fe-2S]-[ferredoxin] + NADH</text>
        <dbReference type="Rhea" id="RHEA:16521"/>
        <dbReference type="Rhea" id="RHEA-COMP:10000"/>
        <dbReference type="Rhea" id="RHEA-COMP:10001"/>
        <dbReference type="ChEBI" id="CHEBI:15378"/>
        <dbReference type="ChEBI" id="CHEBI:33737"/>
        <dbReference type="ChEBI" id="CHEBI:33738"/>
        <dbReference type="ChEBI" id="CHEBI:57540"/>
        <dbReference type="ChEBI" id="CHEBI:57945"/>
        <dbReference type="EC" id="1.18.1.3"/>
    </reaction>
</comment>
<comment type="cofactor">
    <cofactor evidence="7">
        <name>FAD</name>
        <dbReference type="ChEBI" id="CHEBI:57692"/>
    </cofactor>
</comment>
<comment type="pathway">
    <text evidence="7">Aromatic compound metabolism; p-cumate degradation; acetaldehyde and pyruvate from p-cumate.</text>
</comment>
<comment type="subunit">
    <text evidence="7">The p-cumate 2,3-dioxygenase multicomponent enzyme system is composed of an electron transfer component and a dioxygenase component (iron sulfur protein (ISP)). The electron transfer component is composed of a ferredoxin reductase (CmtAa) and a ferredoxin (CmtAd), and the dioxygenase component is formed of a large alpha subunit (CmtAb) and a small beta subunit (CmtAc).</text>
</comment>
<comment type="induction">
    <text evidence="4">Induced by p-cumate and repressed by CymR.</text>
</comment>
<comment type="similarity">
    <text evidence="6">Belongs to the FAD-dependent oxidoreductase family.</text>
</comment>
<evidence type="ECO:0000250" key="1">
    <source>
        <dbReference type="UniProtKB" id="P16640"/>
    </source>
</evidence>
<evidence type="ECO:0000269" key="2">
    <source>
    </source>
</evidence>
<evidence type="ECO:0000269" key="3">
    <source>
    </source>
</evidence>
<evidence type="ECO:0000269" key="4">
    <source>
    </source>
</evidence>
<evidence type="ECO:0000303" key="5">
    <source>
    </source>
</evidence>
<evidence type="ECO:0000305" key="6"/>
<evidence type="ECO:0000305" key="7">
    <source>
    </source>
</evidence>
<evidence type="ECO:0000312" key="8">
    <source>
        <dbReference type="EMBL" id="AAB62284.1"/>
    </source>
</evidence>
<evidence type="ECO:0000312" key="9">
    <source>
        <dbReference type="EMBL" id="ABA10793.1"/>
    </source>
</evidence>
<evidence type="ECO:0000312" key="10">
    <source>
        <dbReference type="EMBL" id="OUS88313.1"/>
    </source>
</evidence>
<reference key="1">
    <citation type="journal article" date="1996" name="J. Bacteriol.">
        <title>p-cumate catabolic pathway in Pseudomonas putida F1: cloning and characterization of DNA carrying the cmt operon.</title>
        <authorList>
            <person name="Eaton R.W."/>
        </authorList>
    </citation>
    <scope>NUCLEOTIDE SEQUENCE [GENOMIC DNA]</scope>
    <scope>FUNCTION</scope>
    <scope>CATALYTIC ACTIVITY</scope>
    <scope>COFACTOR</scope>
    <scope>PATHWAY</scope>
    <scope>SUBUNIT</scope>
    <source>
        <strain evidence="8">F1</strain>
    </source>
</reference>
<reference key="2">
    <citation type="journal article" date="1997" name="J. Bacteriol.">
        <title>p-Cymene catabolic pathway in Pseudomonas putida F1: cloning and characterization of DNA encoding conversion of p-cymene to p-cumate.</title>
        <authorList>
            <person name="Eaton R.W."/>
        </authorList>
    </citation>
    <scope>NUCLEOTIDE SEQUENCE [GENOMIC DNA]</scope>
    <scope>INDUCTION</scope>
    <source>
        <strain evidence="8">F1</strain>
    </source>
</reference>
<reference key="3">
    <citation type="journal article" date="2001" name="Microbiology">
        <title>Pseudomonas putida CE2010 can degrade biphenyl by a mosaic pathway encoded by the tod operon and cmtE, which are identical to those of P. putida F1 except for a single base difference in the operator-promoter region of the cmt operon.</title>
        <authorList>
            <person name="Ohta Y."/>
            <person name="Maeda M."/>
            <person name="Kudo T."/>
        </authorList>
    </citation>
    <scope>NUCLEOTIDE SEQUENCE [GENOMIC DNA]</scope>
</reference>
<reference key="4">
    <citation type="journal article" date="2006" name="J. Microbiol.">
        <title>Identification and expression of the cym, cmt, and tod catabolic genes from Pseudomonas putida KL47: expression of the regulatory todST genes as a factor for catabolic adaptation.</title>
        <authorList>
            <person name="Lee K."/>
            <person name="Ryu E.K."/>
            <person name="Choi K.S."/>
            <person name="Cho M.C."/>
            <person name="Jeong J.J."/>
            <person name="Choi E.N."/>
            <person name="Lee S.O."/>
            <person name="Yoon D.Y."/>
            <person name="Hwang I."/>
            <person name="Kim C.K."/>
        </authorList>
    </citation>
    <scope>NUCLEOTIDE SEQUENCE [GENOMIC DNA]</scope>
    <source>
        <strain evidence="9">KL47</strain>
    </source>
</reference>
<reference key="5">
    <citation type="submission" date="2017-05" db="EMBL/GenBank/DDBJ databases">
        <title>Pseudomonas putida UV495 draft genome.</title>
        <authorList>
            <person name="Skvortsov T."/>
            <person name="Hoering P."/>
            <person name="Allen C.C.R."/>
        </authorList>
    </citation>
    <scope>NUCLEOTIDE SEQUENCE [LARGE SCALE GENOMIC DNA]</scope>
    <source>
        <strain evidence="10">UV4/95</strain>
    </source>
</reference>
<reference key="6">
    <citation type="journal article" date="1977" name="J. Bacteriol.">
        <title>p-cymene pathway in Pseudomonas putida: initial reactions.</title>
        <authorList>
            <person name="DeFrank J.J."/>
            <person name="Ribbons D.W."/>
        </authorList>
    </citation>
    <scope>FUNCTION</scope>
    <source>
        <strain>PL</strain>
    </source>
</reference>
<reference key="7">
    <citation type="journal article" date="1995" name="J. Bacteriol.">
        <title>Formation of indigo and related compounds from indolecarboxylic acids by aromatic acid-degrading bacteria: chromogenic reactions for cloning genes encoding dioxygenases that act on aromatic acids.</title>
        <authorList>
            <person name="Eaton R.W."/>
            <person name="Chapman P.J."/>
        </authorList>
    </citation>
    <scope>FUNCTION</scope>
</reference>
<proteinExistence type="evidence at protein level"/>
<accession>Q51973</accession>
<gene>
    <name evidence="5" type="primary">cmtAa</name>
    <name evidence="10" type="ORF">CBP06_10610</name>
</gene>
<sequence>MGEDISKIVIIGAGQAGATVAFGLRRNGFAGEITLVGEESHLPYERPQLSKEMLRPEASAHKSIKTRADYEEQSILLELGCKVVRADAQAHSIVLDDGRQLAFDRLVIATGVQPRRLSSAFQGAHRVHYLRTLEDAARLRADLEAGKSLAIVGGGVIGLEVAAAARALNCPVTLIEAADRLMSRSVDEVVSAYLDRAHRRNGVDIRYGVAATELLDDGRLRLSDGGTVPAEAVLVGIGVTPNIEGFEHLDITDATGVRVDAYSQTVVPGIFATGDIASQPNGGGFGRIETWANAQDHALNLVKNLMGEAVPYEAPVWFWSDQGPINLQVVGDAANGRRIVRGDEHGDVFSVFRLDANQQVIGCATVNSPKDMAVARRWVKQRSSVDPQRLADPTIPLRDCAV</sequence>
<protein>
    <recommendedName>
        <fullName evidence="5">p-cumate 2,3-dioxygenase system, ferredoxin--NAD(+) reductase component</fullName>
        <ecNumber evidence="7">1.18.1.3</ecNumber>
    </recommendedName>
</protein>